<feature type="initiator methionine" description="Removed" evidence="4 8 9 10 11 12">
    <location>
        <position position="1"/>
    </location>
</feature>
<feature type="chain" id="PRO_0000135115" description="Alkyl hydroperoxide reductase C">
    <location>
        <begin position="2"/>
        <end position="187"/>
    </location>
</feature>
<feature type="domain" description="Thioredoxin" evidence="2">
    <location>
        <begin position="2"/>
        <end position="157"/>
    </location>
</feature>
<feature type="active site" description="Cysteine sulfenic acid (-SOH) intermediate" evidence="14">
    <location>
        <position position="47"/>
    </location>
</feature>
<feature type="modified residue" description="N6-acetyllysine" evidence="5">
    <location>
        <position position="17"/>
    </location>
</feature>
<feature type="modified residue" description="N6-acetyllysine" evidence="5">
    <location>
        <position position="93"/>
    </location>
</feature>
<feature type="modified residue" description="N6-acetyllysine" evidence="5">
    <location>
        <position position="153"/>
    </location>
</feature>
<feature type="modified residue" description="N6-acetyllysine" evidence="5">
    <location>
        <position position="169"/>
    </location>
</feature>
<feature type="modified residue" description="N6-acetyllysine" evidence="5">
    <location>
        <position position="171"/>
    </location>
</feature>
<feature type="disulfide bond" description="Interchain (with C-166); in linked form" evidence="7 15">
    <location>
        <position position="47"/>
    </location>
</feature>
<feature type="disulfide bond" description="Interchain (with C-47); in linked form" evidence="7 15">
    <location>
        <position position="166"/>
    </location>
</feature>
<feature type="strand" evidence="17">
    <location>
        <begin position="12"/>
        <end position="17"/>
    </location>
</feature>
<feature type="strand" evidence="17">
    <location>
        <begin position="20"/>
        <end position="25"/>
    </location>
</feature>
<feature type="helix" evidence="17">
    <location>
        <begin position="26"/>
        <end position="29"/>
    </location>
</feature>
<feature type="strand" evidence="17">
    <location>
        <begin position="32"/>
        <end position="38"/>
    </location>
</feature>
<feature type="helix" evidence="17">
    <location>
        <begin position="49"/>
        <end position="56"/>
    </location>
</feature>
<feature type="helix" evidence="17">
    <location>
        <begin position="58"/>
        <end position="63"/>
    </location>
</feature>
<feature type="strand" evidence="17">
    <location>
        <begin position="66"/>
        <end position="74"/>
    </location>
</feature>
<feature type="helix" evidence="17">
    <location>
        <begin position="76"/>
        <end position="85"/>
    </location>
</feature>
<feature type="helix" evidence="17">
    <location>
        <begin position="87"/>
        <end position="90"/>
    </location>
</feature>
<feature type="strand" evidence="17">
    <location>
        <begin position="94"/>
        <end position="98"/>
    </location>
</feature>
<feature type="helix" evidence="17">
    <location>
        <begin position="103"/>
        <end position="107"/>
    </location>
</feature>
<feature type="turn" evidence="17">
    <location>
        <begin position="113"/>
        <end position="116"/>
    </location>
</feature>
<feature type="strand" evidence="17">
    <location>
        <begin position="120"/>
        <end position="125"/>
    </location>
</feature>
<feature type="strand" evidence="17">
    <location>
        <begin position="129"/>
        <end position="137"/>
    </location>
</feature>
<feature type="helix" evidence="17">
    <location>
        <begin position="145"/>
        <end position="159"/>
    </location>
</feature>
<feature type="strand" evidence="17">
    <location>
        <begin position="172"/>
        <end position="174"/>
    </location>
</feature>
<gene>
    <name type="primary">ahpC</name>
    <name type="ordered locus">b0605</name>
    <name type="ordered locus">JW0598</name>
</gene>
<reference key="1">
    <citation type="journal article" date="1992" name="J. Bacteriol.">
        <title>Locations of genes encoding alkyl hydroperoxide reductase on the physical map of the Escherichia coli K-12 genome.</title>
        <authorList>
            <person name="Smillie D.A."/>
            <person name="Hayward R.S."/>
            <person name="Suzuki T."/>
            <person name="Fujita N."/>
            <person name="Ishihama A."/>
        </authorList>
    </citation>
    <scope>NUCLEOTIDE SEQUENCE [GENOMIC DNA]</scope>
    <source>
        <strain>K12</strain>
    </source>
</reference>
<reference key="2">
    <citation type="journal article" date="1996" name="DNA Res.">
        <title>A 718-kb DNA sequence of the Escherichia coli K-12 genome corresponding to the 12.7-28.0 min region on the linkage map.</title>
        <authorList>
            <person name="Oshima T."/>
            <person name="Aiba H."/>
            <person name="Baba T."/>
            <person name="Fujita K."/>
            <person name="Hayashi K."/>
            <person name="Honjo A."/>
            <person name="Ikemoto K."/>
            <person name="Inada T."/>
            <person name="Itoh T."/>
            <person name="Kajihara M."/>
            <person name="Kanai K."/>
            <person name="Kashimoto K."/>
            <person name="Kimura S."/>
            <person name="Kitagawa M."/>
            <person name="Makino K."/>
            <person name="Masuda S."/>
            <person name="Miki T."/>
            <person name="Mizobuchi K."/>
            <person name="Mori H."/>
            <person name="Motomura K."/>
            <person name="Nakamura Y."/>
            <person name="Nashimoto H."/>
            <person name="Nishio Y."/>
            <person name="Saito N."/>
            <person name="Sampei G."/>
            <person name="Seki Y."/>
            <person name="Tagami H."/>
            <person name="Takemoto K."/>
            <person name="Wada C."/>
            <person name="Yamamoto Y."/>
            <person name="Yano M."/>
            <person name="Horiuchi T."/>
        </authorList>
    </citation>
    <scope>NUCLEOTIDE SEQUENCE [LARGE SCALE GENOMIC DNA]</scope>
    <source>
        <strain>K12 / W3110 / ATCC 27325 / DSM 5911</strain>
    </source>
</reference>
<reference key="3">
    <citation type="submission" date="1997-01" db="EMBL/GenBank/DDBJ databases">
        <title>Sequence of minutes 4-25 of Escherichia coli.</title>
        <authorList>
            <person name="Chung E."/>
            <person name="Allen E."/>
            <person name="Araujo R."/>
            <person name="Aparicio A.M."/>
            <person name="Davis K."/>
            <person name="Duncan M."/>
            <person name="Federspiel N."/>
            <person name="Hyman R."/>
            <person name="Kalman S."/>
            <person name="Komp C."/>
            <person name="Kurdi O."/>
            <person name="Lew H."/>
            <person name="Lin D."/>
            <person name="Namath A."/>
            <person name="Oefner P."/>
            <person name="Roberts D."/>
            <person name="Schramm S."/>
            <person name="Davis R.W."/>
        </authorList>
    </citation>
    <scope>NUCLEOTIDE SEQUENCE [LARGE SCALE GENOMIC DNA]</scope>
    <source>
        <strain>K12 / MG1655 / ATCC 47076</strain>
    </source>
</reference>
<reference key="4">
    <citation type="journal article" date="1997" name="Science">
        <title>The complete genome sequence of Escherichia coli K-12.</title>
        <authorList>
            <person name="Blattner F.R."/>
            <person name="Plunkett G. III"/>
            <person name="Bloch C.A."/>
            <person name="Perna N.T."/>
            <person name="Burland V."/>
            <person name="Riley M."/>
            <person name="Collado-Vides J."/>
            <person name="Glasner J.D."/>
            <person name="Rode C.K."/>
            <person name="Mayhew G.F."/>
            <person name="Gregor J."/>
            <person name="Davis N.W."/>
            <person name="Kirkpatrick H.A."/>
            <person name="Goeden M.A."/>
            <person name="Rose D.J."/>
            <person name="Mau B."/>
            <person name="Shao Y."/>
        </authorList>
    </citation>
    <scope>NUCLEOTIDE SEQUENCE [LARGE SCALE GENOMIC DNA]</scope>
    <source>
        <strain>K12 / MG1655 / ATCC 47076</strain>
    </source>
</reference>
<reference key="5">
    <citation type="journal article" date="2006" name="Mol. Syst. Biol.">
        <title>Highly accurate genome sequences of Escherichia coli K-12 strains MG1655 and W3110.</title>
        <authorList>
            <person name="Hayashi K."/>
            <person name="Morooka N."/>
            <person name="Yamamoto Y."/>
            <person name="Fujita K."/>
            <person name="Isono K."/>
            <person name="Choi S."/>
            <person name="Ohtsubo E."/>
            <person name="Baba T."/>
            <person name="Wanner B.L."/>
            <person name="Mori H."/>
            <person name="Horiuchi T."/>
        </authorList>
    </citation>
    <scope>NUCLEOTIDE SEQUENCE [LARGE SCALE GENOMIC DNA]</scope>
    <source>
        <strain>K12 / W3110 / ATCC 27325 / DSM 5911</strain>
    </source>
</reference>
<reference key="6">
    <citation type="journal article" date="1992" name="Biochem. Biophys. Res. Commun.">
        <title>Identification of Escherichia coli proteins cross-reacting with antibodies against region 2.2 peptide of RNA polymerase sigma subunit.</title>
        <authorList>
            <person name="Ueshima R."/>
            <person name="Fujita N."/>
            <person name="Ishihama A."/>
        </authorList>
    </citation>
    <scope>PROTEIN SEQUENCE OF 2-31</scope>
</reference>
<reference key="7">
    <citation type="journal article" date="1997" name="Electrophoresis">
        <title>Comparing the predicted and observed properties of proteins encoded in the genome of Escherichia coli K-12.</title>
        <authorList>
            <person name="Link A.J."/>
            <person name="Robison K."/>
            <person name="Church G.M."/>
        </authorList>
    </citation>
    <scope>PROTEIN SEQUENCE OF 2-28 AND 70-81</scope>
    <source>
        <strain>K12 / EMG2</strain>
    </source>
</reference>
<reference key="8">
    <citation type="journal article" date="1995" name="J. Biol. Chem.">
        <title>Thioredoxin-linked 'thiol peroxidase' from periplasmic space of Escherichia coli.</title>
        <authorList>
            <person name="Cha M.-K."/>
            <person name="Kim H.-K."/>
            <person name="Kim I.-H."/>
        </authorList>
    </citation>
    <scope>PROTEIN SEQUENCE OF 2-21</scope>
    <scope>SUBCELLULAR LOCATION</scope>
    <source>
        <strain>K12</strain>
    </source>
</reference>
<reference key="9">
    <citation type="submission" date="1994-09" db="UniProtKB">
        <authorList>
            <person name="Pasquali C."/>
            <person name="Sanchez J.-C."/>
            <person name="Ravier F."/>
            <person name="Golaz O."/>
            <person name="Hughes G.J."/>
            <person name="Frutiger S."/>
            <person name="Paquet N."/>
            <person name="Wilkins M."/>
            <person name="Appel R.D."/>
            <person name="Bairoch A."/>
            <person name="Hochstrasser D.F."/>
        </authorList>
    </citation>
    <scope>PROTEIN SEQUENCE OF 2-14</scope>
    <source>
        <strain>K12 / W3110 / ATCC 27325 / DSM 5911</strain>
    </source>
</reference>
<reference key="10">
    <citation type="journal article" date="1996" name="Eur. J. Biochem.">
        <title>Analysis of global responses by protein and peptide fingerprinting of proteins isolated by two-dimensional gel electrophoresis. Application to the sulfate-starvation response of Escherichia coli.</title>
        <authorList>
            <person name="Quadroni M."/>
            <person name="Staudenmann W."/>
            <person name="Kertesz M.A."/>
            <person name="James P."/>
        </authorList>
    </citation>
    <scope>PROTEIN SEQUENCE OF 2-11</scope>
    <source>
        <strain>K12 / MC4100 / ATCC 35695 / DSM 6574</strain>
    </source>
</reference>
<reference key="11">
    <citation type="journal article" date="1998" name="J. Mol. Biol.">
        <title>Protein identification with N and C-terminal sequence tags in proteome projects.</title>
        <authorList>
            <person name="Wilkins M.R."/>
            <person name="Gasteiger E."/>
            <person name="Tonella L."/>
            <person name="Ou K."/>
            <person name="Tyler M."/>
            <person name="Sanchez J.-C."/>
            <person name="Gooley A.A."/>
            <person name="Walsh B.J."/>
            <person name="Bairoch A."/>
            <person name="Appel R.D."/>
            <person name="Williams K.L."/>
            <person name="Hochstrasser D.F."/>
        </authorList>
    </citation>
    <scope>PROTEIN SEQUENCE OF 2-5</scope>
    <source>
        <strain>K12 / W3110 / ATCC 27325 / DSM 5911</strain>
    </source>
</reference>
<reference key="12">
    <citation type="journal article" date="1997" name="Electrophoresis">
        <title>Escherichia coli proteome analysis using the gene-protein database.</title>
        <authorList>
            <person name="VanBogelen R.A."/>
            <person name="Abshire K.Z."/>
            <person name="Moldover B."/>
            <person name="Olson E.R."/>
            <person name="Neidhardt F.C."/>
        </authorList>
    </citation>
    <scope>IDENTIFICATION BY 2D-GEL</scope>
</reference>
<reference key="13">
    <citation type="journal article" date="2001" name="J. Bacteriol.">
        <title>Alkyl hydroperoxide reductase is the primary scavenger of endogenous hydrogen peroxide in Escherichia coli.</title>
        <authorList>
            <person name="Seaver L.C."/>
            <person name="Imlay J.A."/>
        </authorList>
    </citation>
    <scope>FUNCTION</scope>
</reference>
<reference key="14">
    <citation type="journal article" date="2009" name="Mol. Cell">
        <title>Hydroxyurea induces hydroxyl radical-mediated cell death in Escherichia coli.</title>
        <authorList>
            <person name="Davies B.W."/>
            <person name="Kohanski M.A."/>
            <person name="Simmons L.A."/>
            <person name="Winkler J.A."/>
            <person name="Collins J.J."/>
            <person name="Walker G.C."/>
        </authorList>
    </citation>
    <scope>ROLE IN HYDROXYUREA RESISTANCE</scope>
    <scope>DISRUPTION PHENOTYPE</scope>
    <source>
        <strain>K12 / MC4100 / ATCC 35695 / DSM 6574</strain>
    </source>
</reference>
<reference key="15">
    <citation type="journal article" date="2009" name="Mol. Cell. Proteomics">
        <title>Lysine acetylation is a highly abundant and evolutionarily conserved modification in Escherichia coli.</title>
        <authorList>
            <person name="Zhang J."/>
            <person name="Sprung R."/>
            <person name="Pei J."/>
            <person name="Tan X."/>
            <person name="Kim S."/>
            <person name="Zhu H."/>
            <person name="Liu C.F."/>
            <person name="Grishin N.V."/>
            <person name="Zhao Y."/>
        </authorList>
    </citation>
    <scope>ACETYLATION [LARGE SCALE ANALYSIS] AT LYS-17; LYS-93; LYS-153; LYS-169 AND LYS-171</scope>
    <scope>IDENTIFICATION BY MASS SPECTROMETRY</scope>
    <source>
        <strain>K12 / JW1106</strain>
        <strain>K12 / MG1655 / ATCC 47076</strain>
    </source>
</reference>
<reference key="16">
    <citation type="journal article" date="2014" name="Acta Crystallogr. D">
        <title>Structure, mechanism and ensemble formation of the alkylhydroperoxide reductase subunits AhpC and AhpF from Escherichia coli.</title>
        <authorList>
            <person name="Dip P.V."/>
            <person name="Kamariah N."/>
            <person name="Subramanian Manimekalai M.S."/>
            <person name="Nartey W."/>
            <person name="Balakrishna A.M."/>
            <person name="Eisenhaber F."/>
            <person name="Eisenhaber B."/>
            <person name="Grueber G."/>
        </authorList>
    </citation>
    <scope>SUBUNIT</scope>
</reference>
<reference evidence="15 16" key="17">
    <citation type="journal article" date="2016" name="Sci. Rep.">
        <title>Transition steps in peroxide reduction and a molecular switch for peroxide robustness of prokaryotic peroxiredoxins.</title>
        <authorList>
            <person name="Kamariah N."/>
            <person name="Sek M.F."/>
            <person name="Eisenhaber B."/>
            <person name="Eisenhaber F."/>
            <person name="Grueber G."/>
        </authorList>
    </citation>
    <scope>X-RAY CRYSTALLOGRAPHY (2.70 ANGSTROMS) OF 162-186</scope>
    <scope>DISULFIDE BONDS</scope>
</reference>
<name>AHPC_ECOLI</name>
<proteinExistence type="evidence at protein level"/>
<keyword id="KW-0002">3D-structure</keyword>
<keyword id="KW-0007">Acetylation</keyword>
<keyword id="KW-0049">Antioxidant</keyword>
<keyword id="KW-0963">Cytoplasm</keyword>
<keyword id="KW-0903">Direct protein sequencing</keyword>
<keyword id="KW-1015">Disulfide bond</keyword>
<keyword id="KW-0560">Oxidoreductase</keyword>
<keyword id="KW-0575">Peroxidase</keyword>
<keyword id="KW-0676">Redox-active center</keyword>
<keyword id="KW-1185">Reference proteome</keyword>
<accession>P0AE08</accession>
<accession>P26427</accession>
<protein>
    <recommendedName>
        <fullName>Alkyl hydroperoxide reductase C</fullName>
        <ecNumber evidence="3">1.11.1.26</ecNumber>
    </recommendedName>
    <alternativeName>
        <fullName>Alkyl hydroperoxide reductase protein C22</fullName>
    </alternativeName>
    <alternativeName>
        <fullName>Peroxiredoxin</fullName>
    </alternativeName>
    <alternativeName>
        <fullName>SCRP-23</fullName>
    </alternativeName>
    <alternativeName>
        <fullName>Sulfate starvation-induced protein 8</fullName>
        <shortName>SSI8</shortName>
    </alternativeName>
    <alternativeName>
        <fullName>Thioredoxin peroxidase</fullName>
    </alternativeName>
</protein>
<evidence type="ECO:0000250" key="1">
    <source>
        <dbReference type="UniProtKB" id="P0A251"/>
    </source>
</evidence>
<evidence type="ECO:0000255" key="2">
    <source>
        <dbReference type="PROSITE-ProRule" id="PRU00691"/>
    </source>
</evidence>
<evidence type="ECO:0000269" key="3">
    <source>
    </source>
</evidence>
<evidence type="ECO:0000269" key="4">
    <source>
    </source>
</evidence>
<evidence type="ECO:0000269" key="5">
    <source>
    </source>
</evidence>
<evidence type="ECO:0000269" key="6">
    <source>
    </source>
</evidence>
<evidence type="ECO:0000269" key="7">
    <source>
    </source>
</evidence>
<evidence type="ECO:0000269" key="8">
    <source>
    </source>
</evidence>
<evidence type="ECO:0000269" key="9">
    <source>
    </source>
</evidence>
<evidence type="ECO:0000269" key="10">
    <source>
    </source>
</evidence>
<evidence type="ECO:0000269" key="11">
    <source>
    </source>
</evidence>
<evidence type="ECO:0000269" key="12">
    <source ref="9"/>
</evidence>
<evidence type="ECO:0000305" key="13"/>
<evidence type="ECO:0000305" key="14">
    <source>
    </source>
</evidence>
<evidence type="ECO:0007744" key="15">
    <source>
        <dbReference type="PDB" id="5B8A"/>
    </source>
</evidence>
<evidence type="ECO:0007744" key="16">
    <source>
        <dbReference type="PDB" id="5B8B"/>
    </source>
</evidence>
<evidence type="ECO:0007829" key="17">
    <source>
        <dbReference type="PDB" id="5B8A"/>
    </source>
</evidence>
<organism>
    <name type="scientific">Escherichia coli (strain K12)</name>
    <dbReference type="NCBI Taxonomy" id="83333"/>
    <lineage>
        <taxon>Bacteria</taxon>
        <taxon>Pseudomonadati</taxon>
        <taxon>Pseudomonadota</taxon>
        <taxon>Gammaproteobacteria</taxon>
        <taxon>Enterobacterales</taxon>
        <taxon>Enterobacteriaceae</taxon>
        <taxon>Escherichia</taxon>
    </lineage>
</organism>
<sequence>MSLINTKIKPFKNQAFKNGEFIEITEKDTEGRWSVFFFYPADFTFVCPTELGDVADHYEELQKLGVDVYAVSTDTHFTHKAWHSSSETIAKIKYAMIGDPTGALTRNFDNMREDEGLADRATFVVDPQGIIQAIEVTAEGIGRDASDLLRKIKAAQYVASHPGEVCPAKWKEGEATLAPSLDLVGKI</sequence>
<comment type="function">
    <text evidence="3">Thiol-specific peroxidase that catalyzes the reduction of hydrogen peroxide and organic hydroperoxides to water and alcohols, respectively. Plays a role in cell protection against oxidative stress by detoxifying peroxides. Is the primary scavenger for endogenously generated hydrogen peroxides.</text>
</comment>
<comment type="catalytic activity">
    <reaction evidence="3">
        <text>a hydroperoxide + NADH + H(+) = an alcohol + NAD(+) + H2O</text>
        <dbReference type="Rhea" id="RHEA:62628"/>
        <dbReference type="ChEBI" id="CHEBI:15377"/>
        <dbReference type="ChEBI" id="CHEBI:15378"/>
        <dbReference type="ChEBI" id="CHEBI:30879"/>
        <dbReference type="ChEBI" id="CHEBI:35924"/>
        <dbReference type="ChEBI" id="CHEBI:57540"/>
        <dbReference type="ChEBI" id="CHEBI:57945"/>
        <dbReference type="EC" id="1.11.1.26"/>
    </reaction>
</comment>
<comment type="subunit">
    <text evidence="8">Homodimer; disulfide-linked, upon oxidation. 5 homodimers assemble to form a ring-like decamer (PubMed:7499381).</text>
</comment>
<comment type="interaction">
    <interactant intactId="EBI-547397">
        <id>P0AE08</id>
    </interactant>
    <interactant intactId="EBI-547397">
        <id>P0AE08</id>
        <label>ahpC</label>
    </interactant>
    <organismsDiffer>false</organismsDiffer>
    <experiments>2</experiments>
</comment>
<comment type="subcellular location">
    <subcellularLocation>
        <location evidence="8">Cytoplasm</location>
    </subcellularLocation>
</comment>
<comment type="induction">
    <text>Repressed by sulfate or cysteine.</text>
</comment>
<comment type="disruption phenotype">
    <text evidence="6">Increased sensitivity to hydroxyurea, probably because more reactive oxygen species accumulate.</text>
</comment>
<comment type="miscellaneous">
    <text evidence="1">The active site is a conserved redox-active cysteine residue, the peroxidatic cysteine (C(P)), which makes the nucleophilic attack on the peroxide substrate. The peroxide oxidizes the C(P)-SH to cysteine sulfenic acid (C(P)-SOH), which then reacts with another cysteine residue, the resolving cysteine (C(R)), to form a disulfide bridge. The disulfide is subsequently reduced by an appropriate electron donor to complete the catalytic cycle. In this typical 2-Cys peroxiredoxin, C(R) is provided by the other dimeric subunit to form an intersubunit disulfide. The disulfide is subsequently reduced by AhpF.</text>
</comment>
<comment type="similarity">
    <text evidence="13">Belongs to the peroxiredoxin family. AhpC/Prx1 subfamily.</text>
</comment>
<dbReference type="EC" id="1.11.1.26" evidence="3"/>
<dbReference type="EMBL" id="D13187">
    <property type="protein sequence ID" value="BAA02485.1"/>
    <property type="molecule type" value="Genomic_DNA"/>
</dbReference>
<dbReference type="EMBL" id="U82598">
    <property type="protein sequence ID" value="AAB40806.1"/>
    <property type="molecule type" value="Genomic_DNA"/>
</dbReference>
<dbReference type="EMBL" id="U00096">
    <property type="protein sequence ID" value="AAC73706.1"/>
    <property type="molecule type" value="Genomic_DNA"/>
</dbReference>
<dbReference type="EMBL" id="AP009048">
    <property type="protein sequence ID" value="BAA35235.1"/>
    <property type="molecule type" value="Genomic_DNA"/>
</dbReference>
<dbReference type="PIR" id="C64794">
    <property type="entry name" value="JN0289"/>
</dbReference>
<dbReference type="RefSeq" id="NP_415138.1">
    <property type="nucleotide sequence ID" value="NC_000913.3"/>
</dbReference>
<dbReference type="RefSeq" id="WP_000052796.1">
    <property type="nucleotide sequence ID" value="NZ_STEB01000031.1"/>
</dbReference>
<dbReference type="PDB" id="5B8A">
    <property type="method" value="X-ray"/>
    <property type="resolution" value="2.70 A"/>
    <property type="chains" value="A/B/C/D/E/F/G/H/I/J=1-186"/>
</dbReference>
<dbReference type="PDB" id="5B8B">
    <property type="method" value="X-ray"/>
    <property type="resolution" value="3.10 A"/>
    <property type="chains" value="A/B/C/D/E/F/G/H/I/J=1-186"/>
</dbReference>
<dbReference type="PDBsum" id="5B8A"/>
<dbReference type="PDBsum" id="5B8B"/>
<dbReference type="SMR" id="P0AE08"/>
<dbReference type="BioGRID" id="4259893">
    <property type="interactions" value="72"/>
</dbReference>
<dbReference type="BioGRID" id="849610">
    <property type="interactions" value="4"/>
</dbReference>
<dbReference type="ComplexPortal" id="CPX-4862">
    <property type="entry name" value="Alkyl hydroperoxide reductase complex"/>
</dbReference>
<dbReference type="DIP" id="DIP-36164N"/>
<dbReference type="FunCoup" id="P0AE08">
    <property type="interactions" value="872"/>
</dbReference>
<dbReference type="IntAct" id="P0AE08">
    <property type="interactions" value="36"/>
</dbReference>
<dbReference type="STRING" id="511145.b0605"/>
<dbReference type="PeroxiBase" id="4830">
    <property type="entry name" value="EcoAhpC"/>
</dbReference>
<dbReference type="iPTMnet" id="P0AE08"/>
<dbReference type="jPOST" id="P0AE08"/>
<dbReference type="PaxDb" id="511145-b0605"/>
<dbReference type="EnsemblBacteria" id="AAC73706">
    <property type="protein sequence ID" value="AAC73706"/>
    <property type="gene ID" value="b0605"/>
</dbReference>
<dbReference type="GeneID" id="93776879"/>
<dbReference type="GeneID" id="945225"/>
<dbReference type="KEGG" id="ecj:JW0598"/>
<dbReference type="KEGG" id="eco:b0605"/>
<dbReference type="PATRIC" id="fig|1411691.4.peg.1663"/>
<dbReference type="EchoBASE" id="EB1357"/>
<dbReference type="eggNOG" id="COG0450">
    <property type="taxonomic scope" value="Bacteria"/>
</dbReference>
<dbReference type="HOGENOM" id="CLU_042529_21_3_6"/>
<dbReference type="InParanoid" id="P0AE08"/>
<dbReference type="OMA" id="NNFGVMR"/>
<dbReference type="OrthoDB" id="9812811at2"/>
<dbReference type="PhylomeDB" id="P0AE08"/>
<dbReference type="BioCyc" id="EcoCyc:EG11384-MONOMER"/>
<dbReference type="BioCyc" id="MetaCyc:EG11384-MONOMER"/>
<dbReference type="BRENDA" id="1.11.1.26">
    <property type="organism ID" value="2026"/>
</dbReference>
<dbReference type="PRO" id="PR:P0AE08"/>
<dbReference type="Proteomes" id="UP000000625">
    <property type="component" value="Chromosome"/>
</dbReference>
<dbReference type="GO" id="GO:0009321">
    <property type="term" value="C:alkyl hydroperoxide reductase complex"/>
    <property type="evidence" value="ECO:0000314"/>
    <property type="project" value="EcoCyc"/>
</dbReference>
<dbReference type="GO" id="GO:0005737">
    <property type="term" value="C:cytoplasm"/>
    <property type="evidence" value="ECO:0000314"/>
    <property type="project" value="EcoliWiki"/>
</dbReference>
<dbReference type="GO" id="GO:0005829">
    <property type="term" value="C:cytosol"/>
    <property type="evidence" value="ECO:0000314"/>
    <property type="project" value="EcoCyc"/>
</dbReference>
<dbReference type="GO" id="GO:0016020">
    <property type="term" value="C:membrane"/>
    <property type="evidence" value="ECO:0007005"/>
    <property type="project" value="UniProtKB"/>
</dbReference>
<dbReference type="GO" id="GO:0032843">
    <property type="term" value="F:hydroperoxide reductase activity"/>
    <property type="evidence" value="ECO:0000314"/>
    <property type="project" value="EcoliWiki"/>
</dbReference>
<dbReference type="GO" id="GO:0042802">
    <property type="term" value="F:identical protein binding"/>
    <property type="evidence" value="ECO:0000353"/>
    <property type="project" value="IntAct"/>
</dbReference>
<dbReference type="GO" id="GO:0102039">
    <property type="term" value="F:NADH-dependent peroxiredoxin activity"/>
    <property type="evidence" value="ECO:0007669"/>
    <property type="project" value="UniProtKB-EC"/>
</dbReference>
<dbReference type="GO" id="GO:0016684">
    <property type="term" value="F:oxidoreductase activity, acting on peroxide as acceptor"/>
    <property type="evidence" value="ECO:0000315"/>
    <property type="project" value="EcoliWiki"/>
</dbReference>
<dbReference type="GO" id="GO:0004601">
    <property type="term" value="F:peroxidase activity"/>
    <property type="evidence" value="ECO:0000316"/>
    <property type="project" value="EcoliWiki"/>
</dbReference>
<dbReference type="GO" id="GO:0008379">
    <property type="term" value="F:thioredoxin peroxidase activity"/>
    <property type="evidence" value="ECO:0000318"/>
    <property type="project" value="GO_Central"/>
</dbReference>
<dbReference type="GO" id="GO:0045454">
    <property type="term" value="P:cell redox homeostasis"/>
    <property type="evidence" value="ECO:0000318"/>
    <property type="project" value="GO_Central"/>
</dbReference>
<dbReference type="GO" id="GO:0009970">
    <property type="term" value="P:cellular response to sulfate starvation"/>
    <property type="evidence" value="ECO:0000314"/>
    <property type="project" value="EcoliWiki"/>
</dbReference>
<dbReference type="GO" id="GO:0042744">
    <property type="term" value="P:hydrogen peroxide catabolic process"/>
    <property type="evidence" value="ECO:0000314"/>
    <property type="project" value="ComplexPortal"/>
</dbReference>
<dbReference type="GO" id="GO:0033195">
    <property type="term" value="P:response to alkyl hydroperoxide"/>
    <property type="evidence" value="ECO:0000315"/>
    <property type="project" value="EcoCyc"/>
</dbReference>
<dbReference type="GO" id="GO:0033194">
    <property type="term" value="P:response to hydroperoxide"/>
    <property type="evidence" value="ECO:0000315"/>
    <property type="project" value="EcoCyc"/>
</dbReference>
<dbReference type="GO" id="GO:0006979">
    <property type="term" value="P:response to oxidative stress"/>
    <property type="evidence" value="ECO:0000318"/>
    <property type="project" value="GO_Central"/>
</dbReference>
<dbReference type="GO" id="GO:0019290">
    <property type="term" value="P:siderophore biosynthetic process"/>
    <property type="evidence" value="ECO:0000315"/>
    <property type="project" value="CACAO"/>
</dbReference>
<dbReference type="CDD" id="cd03015">
    <property type="entry name" value="PRX_Typ2cys"/>
    <property type="match status" value="1"/>
</dbReference>
<dbReference type="FunFam" id="3.40.30.10:FF:000002">
    <property type="entry name" value="Alkyl hydroperoxide reductase C"/>
    <property type="match status" value="1"/>
</dbReference>
<dbReference type="Gene3D" id="3.40.30.10">
    <property type="entry name" value="Glutaredoxin"/>
    <property type="match status" value="1"/>
</dbReference>
<dbReference type="InterPro" id="IPR017559">
    <property type="entry name" value="AhpC"/>
</dbReference>
<dbReference type="InterPro" id="IPR000866">
    <property type="entry name" value="AhpC/TSA"/>
</dbReference>
<dbReference type="InterPro" id="IPR050217">
    <property type="entry name" value="Peroxiredoxin"/>
</dbReference>
<dbReference type="InterPro" id="IPR024706">
    <property type="entry name" value="Peroxiredoxin_AhpC-typ"/>
</dbReference>
<dbReference type="InterPro" id="IPR019479">
    <property type="entry name" value="Peroxiredoxin_C"/>
</dbReference>
<dbReference type="InterPro" id="IPR036249">
    <property type="entry name" value="Thioredoxin-like_sf"/>
</dbReference>
<dbReference type="InterPro" id="IPR013766">
    <property type="entry name" value="Thioredoxin_domain"/>
</dbReference>
<dbReference type="NCBIfam" id="TIGR03137">
    <property type="entry name" value="AhpC"/>
    <property type="match status" value="1"/>
</dbReference>
<dbReference type="PANTHER" id="PTHR10681:SF121">
    <property type="entry name" value="ALKYL HYDROPEROXIDE REDUCTASE C"/>
    <property type="match status" value="1"/>
</dbReference>
<dbReference type="PANTHER" id="PTHR10681">
    <property type="entry name" value="THIOREDOXIN PEROXIDASE"/>
    <property type="match status" value="1"/>
</dbReference>
<dbReference type="Pfam" id="PF10417">
    <property type="entry name" value="1-cysPrx_C"/>
    <property type="match status" value="1"/>
</dbReference>
<dbReference type="Pfam" id="PF00578">
    <property type="entry name" value="AhpC-TSA"/>
    <property type="match status" value="1"/>
</dbReference>
<dbReference type="PIRSF" id="PIRSF000239">
    <property type="entry name" value="AHPC"/>
    <property type="match status" value="1"/>
</dbReference>
<dbReference type="SUPFAM" id="SSF52833">
    <property type="entry name" value="Thioredoxin-like"/>
    <property type="match status" value="1"/>
</dbReference>
<dbReference type="PROSITE" id="PS51352">
    <property type="entry name" value="THIOREDOXIN_2"/>
    <property type="match status" value="1"/>
</dbReference>